<name>RR18_SPIOL</name>
<evidence type="ECO:0000269" key="1">
    <source>
    </source>
</evidence>
<evidence type="ECO:0000269" key="2">
    <source>
    </source>
</evidence>
<evidence type="ECO:0000303" key="3">
    <source>
    </source>
</evidence>
<evidence type="ECO:0000303" key="4">
    <source>
    </source>
</evidence>
<evidence type="ECO:0000305" key="5"/>
<evidence type="ECO:0000305" key="6">
    <source>
    </source>
</evidence>
<evidence type="ECO:0000305" key="7">
    <source>
    </source>
</evidence>
<reference key="1">
    <citation type="journal article" date="2001" name="Plant Mol. Biol.">
        <title>The plastid chromosome of spinach (Spinacia oleracea): complete nucleotide sequence and gene organization.</title>
        <authorList>
            <person name="Schmitz-Linneweber C."/>
            <person name="Maier R.M."/>
            <person name="Alcaraz J.-P."/>
            <person name="Cottet A."/>
            <person name="Herrmann R.G."/>
            <person name="Mache R."/>
        </authorList>
    </citation>
    <scope>NUCLEOTIDE SEQUENCE [LARGE SCALE GENOMIC DNA]</scope>
    <source>
        <strain>cv. Geant d'hiver</strain>
        <strain>cv. Monatol</strain>
    </source>
</reference>
<reference key="2">
    <citation type="journal article" date="2000" name="J. Biol. Chem.">
        <title>The plastid ribosomal proteins. Identification of all the proteins in the 30S subunit of an organelle ribosome (chloroplast).</title>
        <authorList>
            <person name="Yamaguchi K."/>
            <person name="von Knoblauch K."/>
            <person name="Subramanian A.R."/>
        </authorList>
    </citation>
    <scope>PROTEIN SEQUENCE OF 1-15</scope>
    <scope>SUBUNIT</scope>
    <scope>SUBCELLULAR LOCATION</scope>
    <scope>MASS SPECTROMETRY</scope>
    <source>
        <strain>cv. Alwaro</strain>
        <tissue>Leaf</tissue>
    </source>
</reference>
<reference key="3">
    <citation type="journal article" date="2007" name="Proc. Natl. Acad. Sci. U.S.A.">
        <title>Cryo-EM study of the spinach chloroplast ribosome reveals the structural and functional roles of plastid-specific ribosomal proteins.</title>
        <authorList>
            <person name="Sharma M.R."/>
            <person name="Wilson D.N."/>
            <person name="Datta P.P."/>
            <person name="Barat C."/>
            <person name="Schluenzen F."/>
            <person name="Fucini P."/>
            <person name="Agrawal R.K."/>
        </authorList>
    </citation>
    <scope>STRUCTURE BY ELECTRON MICROSCOPY (9.4 ANGSTROMS)</scope>
</reference>
<reference key="4">
    <citation type="journal article" date="2017" name="EMBO J.">
        <title>The complete structure of the chloroplast 70S ribosome in complex with translation factor pY.</title>
        <authorList>
            <person name="Bieri P."/>
            <person name="Leibundgut M."/>
            <person name="Saurer M."/>
            <person name="Boehringer D."/>
            <person name="Ban N."/>
        </authorList>
    </citation>
    <scope>STRUCTURE BY ELECTRON MICROSCOPY (3.40 ANGSTROMS)</scope>
    <scope>SUBUNIT</scope>
    <scope>SUBCELLULAR LOCATION</scope>
</reference>
<sequence>MDKSKRPFIKSKRSFRRRLPPIQSGDRIDYRNMSLISRFISEQGKILSRRVNRLTLKQQRLITSAIKQARILSLLPFLNNEKQFERTESTTRTANFRTKNK</sequence>
<accession>Q9M3K7</accession>
<accession>P82135</accession>
<accession>P82136</accession>
<gene>
    <name type="primary">RPS18</name>
</gene>
<organism>
    <name type="scientific">Spinacia oleracea</name>
    <name type="common">Spinach</name>
    <dbReference type="NCBI Taxonomy" id="3562"/>
    <lineage>
        <taxon>Eukaryota</taxon>
        <taxon>Viridiplantae</taxon>
        <taxon>Streptophyta</taxon>
        <taxon>Embryophyta</taxon>
        <taxon>Tracheophyta</taxon>
        <taxon>Spermatophyta</taxon>
        <taxon>Magnoliopsida</taxon>
        <taxon>eudicotyledons</taxon>
        <taxon>Gunneridae</taxon>
        <taxon>Pentapetalae</taxon>
        <taxon>Caryophyllales</taxon>
        <taxon>Chenopodiaceae</taxon>
        <taxon>Chenopodioideae</taxon>
        <taxon>Anserineae</taxon>
        <taxon>Spinacia</taxon>
    </lineage>
</organism>
<protein>
    <recommendedName>
        <fullName evidence="4">Small ribosomal subunit protein bS18c</fullName>
    </recommendedName>
    <alternativeName>
        <fullName evidence="3">30S ribosomal protein S18, chloroplastic</fullName>
    </alternativeName>
</protein>
<keyword id="KW-0002">3D-structure</keyword>
<keyword id="KW-0150">Chloroplast</keyword>
<keyword id="KW-0903">Direct protein sequencing</keyword>
<keyword id="KW-0934">Plastid</keyword>
<keyword id="KW-1185">Reference proteome</keyword>
<keyword id="KW-0687">Ribonucleoprotein</keyword>
<keyword id="KW-0689">Ribosomal protein</keyword>
<keyword id="KW-0694">RNA-binding</keyword>
<keyword id="KW-0699">rRNA-binding</keyword>
<proteinExistence type="evidence at protein level"/>
<comment type="function">
    <text evidence="6 7">Component of the chloroplast ribosome (chloro-ribosome), a dedicated translation machinery responsible for the synthesis of chloroplast genome-encoded proteins, including proteins of the transcription and translation machinery and components of the photosynthetic apparatus.</text>
</comment>
<comment type="subunit">
    <text evidence="1 2">Component of the chloroplast small ribosomal subunit (SSU). Mature 70S chloroplast ribosomes of higher plants consist of a small (30S) and a large (50S) subunit. The 30S small subunit contains 1 molecule of ribosomal RNA (16S rRNA) and 24 different proteins. The 50S large subunit contains 3 rRNA molecules (23S, 5S and 4.5S rRNA) and 33 different proteins.</text>
</comment>
<comment type="subcellular location">
    <subcellularLocation>
        <location evidence="1 2">Plastid</location>
        <location evidence="1 2">Chloroplast</location>
    </subcellularLocation>
</comment>
<comment type="mass spectrometry"/>
<comment type="mass spectrometry"/>
<comment type="miscellaneous">
    <text evidence="1">Two forms, which differ in pI, are produced, S18 alpha and S18 beta.</text>
</comment>
<comment type="similarity">
    <text evidence="5">Belongs to the bacterial ribosomal protein bS18 family.</text>
</comment>
<feature type="chain" id="PRO_0000111312" description="Small ribosomal subunit protein bS18c">
    <location>
        <begin position="1"/>
        <end position="101"/>
    </location>
</feature>
<feature type="site" description="Not N-formylated" evidence="1">
    <location>
        <position position="1"/>
    </location>
</feature>
<feature type="sequence conflict" description="In Ref. 2; AA sequence." evidence="5" ref="2">
    <original>KRS</original>
    <variation>RRN</variation>
    <location>
        <begin position="12"/>
        <end position="14"/>
    </location>
</feature>
<geneLocation type="chloroplast"/>
<dbReference type="EMBL" id="AJ400848">
    <property type="protein sequence ID" value="CAB88750.1"/>
    <property type="molecule type" value="Genomic_DNA"/>
</dbReference>
<dbReference type="RefSeq" id="NP_054957.1">
    <property type="nucleotide sequence ID" value="NC_002202.1"/>
</dbReference>
<dbReference type="PDB" id="4V61">
    <property type="method" value="EM"/>
    <property type="resolution" value="9.40 A"/>
    <property type="chains" value="AR=1-101"/>
</dbReference>
<dbReference type="PDB" id="5MMJ">
    <property type="method" value="EM"/>
    <property type="resolution" value="3.65 A"/>
    <property type="chains" value="r=1-101"/>
</dbReference>
<dbReference type="PDB" id="5MMM">
    <property type="method" value="EM"/>
    <property type="resolution" value="3.40 A"/>
    <property type="chains" value="r=1-101"/>
</dbReference>
<dbReference type="PDB" id="5X8P">
    <property type="method" value="EM"/>
    <property type="resolution" value="3.40 A"/>
    <property type="chains" value="r=1-101"/>
</dbReference>
<dbReference type="PDB" id="5X8R">
    <property type="method" value="EM"/>
    <property type="resolution" value="3.70 A"/>
    <property type="chains" value="r=1-101"/>
</dbReference>
<dbReference type="PDB" id="6ERI">
    <property type="method" value="EM"/>
    <property type="resolution" value="3.00 A"/>
    <property type="chains" value="BR=27-79"/>
</dbReference>
<dbReference type="PDBsum" id="4V61"/>
<dbReference type="PDBsum" id="5MMJ"/>
<dbReference type="PDBsum" id="5MMM"/>
<dbReference type="PDBsum" id="5X8P"/>
<dbReference type="PDBsum" id="5X8R"/>
<dbReference type="PDBsum" id="6ERI"/>
<dbReference type="EMDB" id="EMD-3532"/>
<dbReference type="EMDB" id="EMD-3533"/>
<dbReference type="EMDB" id="EMD-3941"/>
<dbReference type="EMDB" id="EMD-6709"/>
<dbReference type="EMDB" id="EMD-6710"/>
<dbReference type="SMR" id="Q9M3K7"/>
<dbReference type="FunCoup" id="Q9M3K7">
    <property type="interactions" value="968"/>
</dbReference>
<dbReference type="STRING" id="3562.Q9M3K7"/>
<dbReference type="GeneID" id="2715640"/>
<dbReference type="KEGG" id="soe:2715640"/>
<dbReference type="InParanoid" id="Q9M3K7"/>
<dbReference type="OrthoDB" id="21463at2759"/>
<dbReference type="Proteomes" id="UP001155700">
    <property type="component" value="Chloroplast Pltd"/>
</dbReference>
<dbReference type="GO" id="GO:0009507">
    <property type="term" value="C:chloroplast"/>
    <property type="evidence" value="ECO:0007669"/>
    <property type="project" value="UniProtKB-SubCell"/>
</dbReference>
<dbReference type="GO" id="GO:0005763">
    <property type="term" value="C:mitochondrial small ribosomal subunit"/>
    <property type="evidence" value="ECO:0000318"/>
    <property type="project" value="GO_Central"/>
</dbReference>
<dbReference type="GO" id="GO:0070181">
    <property type="term" value="F:small ribosomal subunit rRNA binding"/>
    <property type="evidence" value="ECO:0000318"/>
    <property type="project" value="GO_Central"/>
</dbReference>
<dbReference type="GO" id="GO:0003735">
    <property type="term" value="F:structural constituent of ribosome"/>
    <property type="evidence" value="ECO:0000318"/>
    <property type="project" value="GO_Central"/>
</dbReference>
<dbReference type="GO" id="GO:0006412">
    <property type="term" value="P:translation"/>
    <property type="evidence" value="ECO:0000318"/>
    <property type="project" value="GO_Central"/>
</dbReference>
<dbReference type="FunFam" id="4.10.640.10:FF:000002">
    <property type="entry name" value="30S ribosomal protein S18, chloroplastic"/>
    <property type="match status" value="1"/>
</dbReference>
<dbReference type="Gene3D" id="4.10.640.10">
    <property type="entry name" value="Ribosomal protein S18"/>
    <property type="match status" value="1"/>
</dbReference>
<dbReference type="HAMAP" id="MF_00270">
    <property type="entry name" value="Ribosomal_bS18"/>
    <property type="match status" value="1"/>
</dbReference>
<dbReference type="InterPro" id="IPR001648">
    <property type="entry name" value="Ribosomal_bS18"/>
</dbReference>
<dbReference type="InterPro" id="IPR018275">
    <property type="entry name" value="Ribosomal_bS18_CS"/>
</dbReference>
<dbReference type="InterPro" id="IPR036870">
    <property type="entry name" value="Ribosomal_bS18_sf"/>
</dbReference>
<dbReference type="NCBIfam" id="TIGR00165">
    <property type="entry name" value="S18"/>
    <property type="match status" value="1"/>
</dbReference>
<dbReference type="PANTHER" id="PTHR13479">
    <property type="entry name" value="30S RIBOSOMAL PROTEIN S18"/>
    <property type="match status" value="1"/>
</dbReference>
<dbReference type="PANTHER" id="PTHR13479:SF40">
    <property type="entry name" value="SMALL RIBOSOMAL SUBUNIT PROTEIN BS18M"/>
    <property type="match status" value="1"/>
</dbReference>
<dbReference type="Pfam" id="PF01084">
    <property type="entry name" value="Ribosomal_S18"/>
    <property type="match status" value="1"/>
</dbReference>
<dbReference type="PRINTS" id="PR00974">
    <property type="entry name" value="RIBOSOMALS18"/>
</dbReference>
<dbReference type="SUPFAM" id="SSF46911">
    <property type="entry name" value="Ribosomal protein S18"/>
    <property type="match status" value="1"/>
</dbReference>
<dbReference type="PROSITE" id="PS00057">
    <property type="entry name" value="RIBOSOMAL_S18"/>
    <property type="match status" value="1"/>
</dbReference>